<feature type="signal peptide" evidence="2">
    <location>
        <begin position="1"/>
        <end position="22"/>
    </location>
</feature>
<feature type="propeptide" id="PRO_0000006877" evidence="1">
    <location>
        <begin position="23"/>
        <end position="64"/>
    </location>
</feature>
<feature type="peptide" id="PRO_0000006878" description="Demidefensin-3">
    <location>
        <begin position="65"/>
        <end position="73"/>
    </location>
</feature>
<feature type="propeptide" id="PRO_0000006879" evidence="1">
    <location>
        <begin position="74"/>
        <end position="76"/>
    </location>
</feature>
<feature type="region of interest" description="Disordered" evidence="3">
    <location>
        <begin position="25"/>
        <end position="45"/>
    </location>
</feature>
<feature type="compositionally biased region" description="Low complexity" evidence="3">
    <location>
        <begin position="30"/>
        <end position="44"/>
    </location>
</feature>
<feature type="disulfide bond" description="Interchain" evidence="1">
    <location>
        <position position="66"/>
    </location>
</feature>
<feature type="disulfide bond" evidence="1">
    <location>
        <begin position="68"/>
        <end position="73"/>
    </location>
</feature>
<feature type="sequence conflict" description="In Ref. 1; published sequence." evidence="4" ref="1">
    <original>L</original>
    <variation>F</variation>
    <location>
        <position position="4"/>
    </location>
</feature>
<feature type="sequence conflict" description="In Ref. 1; published sequence." evidence="4" ref="1">
    <original>W</original>
    <variation>R</variation>
    <location>
        <position position="49"/>
    </location>
</feature>
<proteinExistence type="inferred from homology"/>
<keyword id="KW-0044">Antibiotic</keyword>
<keyword id="KW-0929">Antimicrobial</keyword>
<keyword id="KW-0211">Defensin</keyword>
<keyword id="KW-1015">Disulfide bond</keyword>
<keyword id="KW-0295">Fungicide</keyword>
<keyword id="KW-1185">Reference proteome</keyword>
<keyword id="KW-0732">Signal</keyword>
<comment type="function">
    <text evidence="1">Has antimicrobial activities against bacteria and fungi.</text>
</comment>
<comment type="subunit">
    <text evidence="1">Forms a cyclic homodimer; disulfide-linked.</text>
</comment>
<comment type="PTM">
    <text evidence="1">This is a cyclic peptide.</text>
</comment>
<comment type="similarity">
    <text evidence="4">Belongs to the alpha-defensin family. Theta subfamily.</text>
</comment>
<comment type="caution">
    <text evidence="4">The mature 9-residue peptide is expected to be found in 18-residue cyclopeptides produced by combinatorial peptide splicing either with itself or with other demidefensins. However among cyclopeptides screened for antimicrobial activity, no peptides that would have been produced from this sequence were detected.</text>
</comment>
<sequence>MRTLALHTAMLLLVALHAQAEARQARADEAAAQQQPGADDQGMAHSFTWPENAALPLSESERGLRCICVLGICRLL</sequence>
<protein>
    <recommendedName>
        <fullName>Demidefensin-3</fullName>
    </recommendedName>
</protein>
<accession>Q9GLR2</accession>
<evidence type="ECO:0000250" key="1"/>
<evidence type="ECO:0000255" key="2"/>
<evidence type="ECO:0000256" key="3">
    <source>
        <dbReference type="SAM" id="MobiDB-lite"/>
    </source>
</evidence>
<evidence type="ECO:0000305" key="4"/>
<dbReference type="EMBL" id="AF184158">
    <property type="protein sequence ID" value="AAG17204.1"/>
    <property type="molecule type" value="mRNA"/>
</dbReference>
<dbReference type="RefSeq" id="NP_001027988.1">
    <property type="nucleotide sequence ID" value="NM_001032816.1"/>
</dbReference>
<dbReference type="PaxDb" id="9544-ENSMMUP00000023401"/>
<dbReference type="GeneID" id="574121"/>
<dbReference type="KEGG" id="mcc:574121"/>
<dbReference type="CTD" id="574121"/>
<dbReference type="eggNOG" id="ENOG502TEA8">
    <property type="taxonomic scope" value="Eukaryota"/>
</dbReference>
<dbReference type="InParanoid" id="Q9GLR2"/>
<dbReference type="OrthoDB" id="17633at314294"/>
<dbReference type="Proteomes" id="UP000006718">
    <property type="component" value="Unassembled WGS sequence"/>
</dbReference>
<dbReference type="GO" id="GO:0005615">
    <property type="term" value="C:extracellular space"/>
    <property type="evidence" value="ECO:0000318"/>
    <property type="project" value="GO_Central"/>
</dbReference>
<dbReference type="GO" id="GO:0019731">
    <property type="term" value="P:antibacterial humoral response"/>
    <property type="evidence" value="ECO:0000318"/>
    <property type="project" value="GO_Central"/>
</dbReference>
<dbReference type="GO" id="GO:0061844">
    <property type="term" value="P:antimicrobial humoral immune response mediated by antimicrobial peptide"/>
    <property type="evidence" value="ECO:0000318"/>
    <property type="project" value="GO_Central"/>
</dbReference>
<dbReference type="GO" id="GO:0071222">
    <property type="term" value="P:cellular response to lipopolysaccharide"/>
    <property type="evidence" value="ECO:0000318"/>
    <property type="project" value="GO_Central"/>
</dbReference>
<dbReference type="GO" id="GO:0050832">
    <property type="term" value="P:defense response to fungus"/>
    <property type="evidence" value="ECO:0007669"/>
    <property type="project" value="UniProtKB-KW"/>
</dbReference>
<dbReference type="GO" id="GO:0050829">
    <property type="term" value="P:defense response to Gram-negative bacterium"/>
    <property type="evidence" value="ECO:0000318"/>
    <property type="project" value="GO_Central"/>
</dbReference>
<dbReference type="GO" id="GO:0050830">
    <property type="term" value="P:defense response to Gram-positive bacterium"/>
    <property type="evidence" value="ECO:0000318"/>
    <property type="project" value="GO_Central"/>
</dbReference>
<dbReference type="GO" id="GO:0051673">
    <property type="term" value="P:disruption of plasma membrane integrity in another organism"/>
    <property type="evidence" value="ECO:0000318"/>
    <property type="project" value="GO_Central"/>
</dbReference>
<dbReference type="GO" id="GO:0002227">
    <property type="term" value="P:innate immune response in mucosa"/>
    <property type="evidence" value="ECO:0000318"/>
    <property type="project" value="GO_Central"/>
</dbReference>
<dbReference type="GO" id="GO:0031640">
    <property type="term" value="P:killing of cells of another organism"/>
    <property type="evidence" value="ECO:0007669"/>
    <property type="project" value="UniProtKB-KW"/>
</dbReference>
<dbReference type="InterPro" id="IPR016327">
    <property type="entry name" value="Alpha-defensin"/>
</dbReference>
<dbReference type="InterPro" id="IPR002366">
    <property type="entry name" value="Alpha-defensin_N"/>
</dbReference>
<dbReference type="PANTHER" id="PTHR11876">
    <property type="entry name" value="ALPHA-DEFENSIN 1"/>
    <property type="match status" value="1"/>
</dbReference>
<dbReference type="PANTHER" id="PTHR11876:SF34">
    <property type="entry name" value="DEMIDEFENSIN-3"/>
    <property type="match status" value="1"/>
</dbReference>
<dbReference type="Pfam" id="PF00879">
    <property type="entry name" value="Defensin_propep"/>
    <property type="match status" value="1"/>
</dbReference>
<dbReference type="PIRSF" id="PIRSF001875">
    <property type="entry name" value="Alpha-defensin"/>
    <property type="match status" value="1"/>
</dbReference>
<dbReference type="SMART" id="SM01418">
    <property type="entry name" value="Defensin_propep"/>
    <property type="match status" value="1"/>
</dbReference>
<name>RTD3_MACMU</name>
<organism>
    <name type="scientific">Macaca mulatta</name>
    <name type="common">Rhesus macaque</name>
    <dbReference type="NCBI Taxonomy" id="9544"/>
    <lineage>
        <taxon>Eukaryota</taxon>
        <taxon>Metazoa</taxon>
        <taxon>Chordata</taxon>
        <taxon>Craniata</taxon>
        <taxon>Vertebrata</taxon>
        <taxon>Euteleostomi</taxon>
        <taxon>Mammalia</taxon>
        <taxon>Eutheria</taxon>
        <taxon>Euarchontoglires</taxon>
        <taxon>Primates</taxon>
        <taxon>Haplorrhini</taxon>
        <taxon>Catarrhini</taxon>
        <taxon>Cercopithecidae</taxon>
        <taxon>Cercopithecinae</taxon>
        <taxon>Macaca</taxon>
    </lineage>
</organism>
<reference key="1">
    <citation type="journal article" date="2001" name="J. Leukoc. Biol.">
        <title>Circular minidefensins and posttranslational generation of molecular diversity.</title>
        <authorList>
            <person name="Leonova L."/>
            <person name="Kokryakov V.N."/>
            <person name="Aleshina G."/>
            <person name="Hong T."/>
            <person name="Nguyen T."/>
            <person name="Zhao C."/>
            <person name="Waring A.J."/>
            <person name="Lehrer R.I."/>
        </authorList>
    </citation>
    <scope>NUCLEOTIDE SEQUENCE [MRNA]</scope>
    <source>
        <tissue>Bone marrow</tissue>
    </source>
</reference>